<gene>
    <name type="primary">Hp1bp3</name>
</gene>
<name>HP1B3_RAT</name>
<feature type="initiator methionine" description="Removed" evidence="2">
    <location>
        <position position="1"/>
    </location>
</feature>
<feature type="chain" id="PRO_0000339644" description="Heterochromatin protein 1-binding protein 3">
    <location>
        <begin position="2"/>
        <end position="553"/>
    </location>
</feature>
<feature type="domain" description="H15 1" evidence="3">
    <location>
        <begin position="157"/>
        <end position="232"/>
    </location>
</feature>
<feature type="domain" description="H15 2" evidence="3">
    <location>
        <begin position="253"/>
        <end position="328"/>
    </location>
</feature>
<feature type="domain" description="H15 3" evidence="3">
    <location>
        <begin position="335"/>
        <end position="411"/>
    </location>
</feature>
<feature type="region of interest" description="Disordered" evidence="4">
    <location>
        <begin position="30"/>
        <end position="131"/>
    </location>
</feature>
<feature type="region of interest" description="Disordered" evidence="4">
    <location>
        <begin position="231"/>
        <end position="251"/>
    </location>
</feature>
<feature type="region of interest" description="Disordered" evidence="4">
    <location>
        <begin position="422"/>
        <end position="553"/>
    </location>
</feature>
<feature type="short sequence motif" description="PxVxL motif" evidence="2">
    <location>
        <begin position="253"/>
        <end position="257"/>
    </location>
</feature>
<feature type="compositionally biased region" description="Acidic residues" evidence="4">
    <location>
        <begin position="60"/>
        <end position="71"/>
    </location>
</feature>
<feature type="compositionally biased region" description="Basic and acidic residues" evidence="4">
    <location>
        <begin position="91"/>
        <end position="127"/>
    </location>
</feature>
<feature type="compositionally biased region" description="Basic residues" evidence="4">
    <location>
        <begin position="236"/>
        <end position="246"/>
    </location>
</feature>
<feature type="compositionally biased region" description="Acidic residues" evidence="4">
    <location>
        <begin position="428"/>
        <end position="449"/>
    </location>
</feature>
<feature type="compositionally biased region" description="Basic residues" evidence="4">
    <location>
        <begin position="488"/>
        <end position="509"/>
    </location>
</feature>
<feature type="compositionally biased region" description="Basic residues" evidence="4">
    <location>
        <begin position="542"/>
        <end position="553"/>
    </location>
</feature>
<feature type="modified residue" description="N-acetylalanine" evidence="2">
    <location>
        <position position="2"/>
    </location>
</feature>
<feature type="modified residue" description="Phosphoserine" evidence="2">
    <location>
        <position position="6"/>
    </location>
</feature>
<feature type="modified residue" description="Phosphothreonine" evidence="5">
    <location>
        <position position="51"/>
    </location>
</feature>
<feature type="modified residue" description="Phosphothreonine" evidence="5">
    <location>
        <position position="85"/>
    </location>
</feature>
<feature type="modified residue" description="Phosphoserine" evidence="2">
    <location>
        <position position="142"/>
    </location>
</feature>
<feature type="modified residue" description="Phosphoserine" evidence="2">
    <location>
        <position position="155"/>
    </location>
</feature>
<feature type="modified residue" description="Phosphoserine" evidence="2">
    <location>
        <position position="156"/>
    </location>
</feature>
<feature type="modified residue" description="N6-acetyllysine" evidence="1">
    <location>
        <position position="190"/>
    </location>
</feature>
<feature type="modified residue" description="Phosphoserine" evidence="2">
    <location>
        <position position="247"/>
    </location>
</feature>
<feature type="modified residue" description="Phosphoserine" evidence="5">
    <location>
        <position position="441"/>
    </location>
</feature>
<feature type="modified residue" description="Phosphoserine" evidence="5">
    <location>
        <position position="442"/>
    </location>
</feature>
<feature type="modified residue" description="Phosphoserine" evidence="5">
    <location>
        <position position="445"/>
    </location>
</feature>
<feature type="cross-link" description="Glycyl lysine isopeptide (Lys-Gly) (interchain with G-Cter in SUMO2)" evidence="2">
    <location>
        <position position="64"/>
    </location>
</feature>
<feature type="cross-link" description="Glycyl lysine isopeptide (Lys-Gly) (interchain with G-Cter in SUMO2)" evidence="2">
    <location>
        <position position="97"/>
    </location>
</feature>
<feature type="cross-link" description="Glycyl lysine isopeptide (Lys-Gly) (interchain with G-Cter in SUMO2)" evidence="2">
    <location>
        <position position="256"/>
    </location>
</feature>
<proteinExistence type="evidence at protein level"/>
<accession>Q6P747</accession>
<keyword id="KW-0007">Acetylation</keyword>
<keyword id="KW-0158">Chromosome</keyword>
<keyword id="KW-0238">DNA-binding</keyword>
<keyword id="KW-1017">Isopeptide bond</keyword>
<keyword id="KW-0539">Nucleus</keyword>
<keyword id="KW-0597">Phosphoprotein</keyword>
<keyword id="KW-1185">Reference proteome</keyword>
<keyword id="KW-0677">Repeat</keyword>
<keyword id="KW-0832">Ubl conjugation</keyword>
<organism>
    <name type="scientific">Rattus norvegicus</name>
    <name type="common">Rat</name>
    <dbReference type="NCBI Taxonomy" id="10116"/>
    <lineage>
        <taxon>Eukaryota</taxon>
        <taxon>Metazoa</taxon>
        <taxon>Chordata</taxon>
        <taxon>Craniata</taxon>
        <taxon>Vertebrata</taxon>
        <taxon>Euteleostomi</taxon>
        <taxon>Mammalia</taxon>
        <taxon>Eutheria</taxon>
        <taxon>Euarchontoglires</taxon>
        <taxon>Glires</taxon>
        <taxon>Rodentia</taxon>
        <taxon>Myomorpha</taxon>
        <taxon>Muroidea</taxon>
        <taxon>Muridae</taxon>
        <taxon>Murinae</taxon>
        <taxon>Rattus</taxon>
    </lineage>
</organism>
<evidence type="ECO:0000250" key="1">
    <source>
        <dbReference type="UniProtKB" id="Q3TEA8"/>
    </source>
</evidence>
<evidence type="ECO:0000250" key="2">
    <source>
        <dbReference type="UniProtKB" id="Q5SSJ5"/>
    </source>
</evidence>
<evidence type="ECO:0000255" key="3">
    <source>
        <dbReference type="PROSITE-ProRule" id="PRU00837"/>
    </source>
</evidence>
<evidence type="ECO:0000256" key="4">
    <source>
        <dbReference type="SAM" id="MobiDB-lite"/>
    </source>
</evidence>
<evidence type="ECO:0007744" key="5">
    <source>
    </source>
</evidence>
<comment type="function">
    <text evidence="2">Component of heterochromatin that maintains heterochromatin integrity during G1/S progression and regulates the duration of G1 phase to critically influence cell proliferative capacity. May play a role in hypoxia-induced oncogenesis.</text>
</comment>
<comment type="subunit">
    <text evidence="2">Interacts (via PxVxL motif) with CBX5.</text>
</comment>
<comment type="subcellular location">
    <subcellularLocation>
        <location evidence="2">Nucleus</location>
    </subcellularLocation>
    <subcellularLocation>
        <location evidence="2">Chromosome</location>
    </subcellularLocation>
    <text evidence="2">localized in nuclei but not in nucleoli in interphase. Colocalized with chromosomes in mitosis, with a gradually increased during G1 progression and a maximum level during late G1 phase (G1/S).</text>
</comment>
<comment type="domain">
    <text evidence="2">A central region that included the first H15 (linker histone H1/H5 globular) domain binds at the entry/exit site of the nucleosomal DNA.</text>
</comment>
<reference key="1">
    <citation type="journal article" date="2004" name="Genome Res.">
        <title>The status, quality, and expansion of the NIH full-length cDNA project: the Mammalian Gene Collection (MGC).</title>
        <authorList>
            <consortium name="The MGC Project Team"/>
        </authorList>
    </citation>
    <scope>NUCLEOTIDE SEQUENCE [LARGE SCALE MRNA]</scope>
    <source>
        <tissue>Prostate</tissue>
    </source>
</reference>
<reference key="2">
    <citation type="journal article" date="2012" name="Nat. Commun.">
        <title>Quantitative maps of protein phosphorylation sites across 14 different rat organs and tissues.</title>
        <authorList>
            <person name="Lundby A."/>
            <person name="Secher A."/>
            <person name="Lage K."/>
            <person name="Nordsborg N.B."/>
            <person name="Dmytriyev A."/>
            <person name="Lundby C."/>
            <person name="Olsen J.V."/>
        </authorList>
    </citation>
    <scope>PHOSPHORYLATION [LARGE SCALE ANALYSIS] AT THR-51; THR-85; SER-441; SER-442 AND SER-445</scope>
    <scope>IDENTIFICATION BY MASS SPECTROMETRY [LARGE SCALE ANALYSIS]</scope>
</reference>
<sequence length="553" mass="60807">MATDMSQGELIHPKALPLIVGAQLIHADKLGEKADDSTMPIRRAVNSTRETPPKSKLAEGEEEKPEPDGSSEESISTVEEPENETPPAPSREAEQPKGEPESGEKEESKSAEETKKEEKDQSKEKEKKVKKTIPAWATLSASQLARAQKQTPMASSPRPKMDAILTEAIKACFQKSGASVVAIRKYIIHKYPSLDLERRGYLLKQALKRELNRGVIKQVKGKGASGSFVVVQKSKTPQKSKNRKKGSAVDPEPQVKLEDVLPLAFTRLCEPKEASYSLIRKYVSQYYPKLRVDIRPQLLKNALQRAVERGQLEQITGKGASGTFQLKKSGEKPLLGGSLMEYAILSAIAAMNEPKTCSTTALKKYVLENHPGTNSNYQMHLLKKTLQKCEKNGWLEQISGKGFSGTFQLCFPYYPSPGVLFPKKVSDGSEDEDEEEDEEESSEDSEDEEPPPKRSLQKKTPAKPQGKTASMKQRGAKPARKVPAAQRGKVRPLPKKAPPKAKTPARKGRPAPSAVKKPSGSTSKKPVANARKEAKLPGKGKSAMKKKSFKTKK</sequence>
<protein>
    <recommendedName>
        <fullName>Heterochromatin protein 1-binding protein 3</fullName>
    </recommendedName>
</protein>
<dbReference type="EMBL" id="BC061837">
    <property type="protein sequence ID" value="AAH61837.1"/>
    <property type="molecule type" value="mRNA"/>
</dbReference>
<dbReference type="RefSeq" id="NP_954539.1">
    <property type="nucleotide sequence ID" value="NM_199108.1"/>
</dbReference>
<dbReference type="RefSeq" id="XP_038965990.1">
    <property type="nucleotide sequence ID" value="XM_039110062.2"/>
</dbReference>
<dbReference type="SMR" id="Q6P747"/>
<dbReference type="BioGRID" id="260500">
    <property type="interactions" value="4"/>
</dbReference>
<dbReference type="FunCoup" id="Q6P747">
    <property type="interactions" value="3692"/>
</dbReference>
<dbReference type="IntAct" id="Q6P747">
    <property type="interactions" value="3"/>
</dbReference>
<dbReference type="STRING" id="10116.ENSRNOP00000019696"/>
<dbReference type="iPTMnet" id="Q6P747"/>
<dbReference type="PhosphoSitePlus" id="Q6P747"/>
<dbReference type="PaxDb" id="10116-ENSRNOP00000019696"/>
<dbReference type="Ensembl" id="ENSRNOT00000075852.2">
    <property type="protein sequence ID" value="ENSRNOP00000067949.2"/>
    <property type="gene ID" value="ENSRNOG00000014445.8"/>
</dbReference>
<dbReference type="GeneID" id="313647"/>
<dbReference type="KEGG" id="rno:313647"/>
<dbReference type="AGR" id="RGD:735099"/>
<dbReference type="CTD" id="50809"/>
<dbReference type="RGD" id="735099">
    <property type="gene designation" value="Hp1bp3"/>
</dbReference>
<dbReference type="eggNOG" id="KOG4012">
    <property type="taxonomic scope" value="Eukaryota"/>
</dbReference>
<dbReference type="GeneTree" id="ENSGT00940000155314"/>
<dbReference type="InParanoid" id="Q6P747"/>
<dbReference type="PhylomeDB" id="Q6P747"/>
<dbReference type="PRO" id="PR:Q6P747"/>
<dbReference type="Proteomes" id="UP000002494">
    <property type="component" value="Chromosome 5"/>
</dbReference>
<dbReference type="GO" id="GO:0005694">
    <property type="term" value="C:chromosome"/>
    <property type="evidence" value="ECO:0000250"/>
    <property type="project" value="UniProtKB"/>
</dbReference>
<dbReference type="GO" id="GO:0000786">
    <property type="term" value="C:nucleosome"/>
    <property type="evidence" value="ECO:0007669"/>
    <property type="project" value="InterPro"/>
</dbReference>
<dbReference type="GO" id="GO:0005634">
    <property type="term" value="C:nucleus"/>
    <property type="evidence" value="ECO:0000250"/>
    <property type="project" value="UniProtKB"/>
</dbReference>
<dbReference type="GO" id="GO:0003677">
    <property type="term" value="F:DNA binding"/>
    <property type="evidence" value="ECO:0000250"/>
    <property type="project" value="UniProtKB"/>
</dbReference>
<dbReference type="GO" id="GO:0031491">
    <property type="term" value="F:nucleosome binding"/>
    <property type="evidence" value="ECO:0000250"/>
    <property type="project" value="UniProtKB"/>
</dbReference>
<dbReference type="GO" id="GO:0030527">
    <property type="term" value="F:structural constituent of chromatin"/>
    <property type="evidence" value="ECO:0007669"/>
    <property type="project" value="InterPro"/>
</dbReference>
<dbReference type="GO" id="GO:0071456">
    <property type="term" value="P:cellular response to hypoxia"/>
    <property type="evidence" value="ECO:0000250"/>
    <property type="project" value="UniProtKB"/>
</dbReference>
<dbReference type="GO" id="GO:0070828">
    <property type="term" value="P:heterochromatin organization"/>
    <property type="evidence" value="ECO:0000250"/>
    <property type="project" value="UniProtKB"/>
</dbReference>
<dbReference type="GO" id="GO:0006334">
    <property type="term" value="P:nucleosome assembly"/>
    <property type="evidence" value="ECO:0007669"/>
    <property type="project" value="InterPro"/>
</dbReference>
<dbReference type="GO" id="GO:0042127">
    <property type="term" value="P:regulation of cell population proliferation"/>
    <property type="evidence" value="ECO:0000250"/>
    <property type="project" value="UniProtKB"/>
</dbReference>
<dbReference type="GO" id="GO:0006355">
    <property type="term" value="P:regulation of DNA-templated transcription"/>
    <property type="evidence" value="ECO:0000250"/>
    <property type="project" value="UniProtKB"/>
</dbReference>
<dbReference type="GO" id="GO:0097298">
    <property type="term" value="P:regulation of nucleus size"/>
    <property type="evidence" value="ECO:0000250"/>
    <property type="project" value="UniProtKB"/>
</dbReference>
<dbReference type="CDD" id="cd00073">
    <property type="entry name" value="H15"/>
    <property type="match status" value="1"/>
</dbReference>
<dbReference type="FunFam" id="1.10.10.10:FF:000228">
    <property type="entry name" value="heterochromatin protein 1-binding protein 3 isoform X1"/>
    <property type="match status" value="1"/>
</dbReference>
<dbReference type="FunFam" id="1.10.10.10:FF:000239">
    <property type="entry name" value="heterochromatin protein 1-binding protein 3 isoform X1"/>
    <property type="match status" value="1"/>
</dbReference>
<dbReference type="FunFam" id="1.10.10.10:FF:000276">
    <property type="entry name" value="heterochromatin protein 1-binding protein 3 isoform X1"/>
    <property type="match status" value="1"/>
</dbReference>
<dbReference type="Gene3D" id="1.10.10.10">
    <property type="entry name" value="Winged helix-like DNA-binding domain superfamily/Winged helix DNA-binding domain"/>
    <property type="match status" value="3"/>
</dbReference>
<dbReference type="InterPro" id="IPR005819">
    <property type="entry name" value="H1/H5"/>
</dbReference>
<dbReference type="InterPro" id="IPR005818">
    <property type="entry name" value="Histone_H1/H5_H15"/>
</dbReference>
<dbReference type="InterPro" id="IPR036388">
    <property type="entry name" value="WH-like_DNA-bd_sf"/>
</dbReference>
<dbReference type="InterPro" id="IPR036390">
    <property type="entry name" value="WH_DNA-bd_sf"/>
</dbReference>
<dbReference type="PANTHER" id="PTHR15832:SF1">
    <property type="entry name" value="HETEROCHROMATIN PROTEIN 1-BINDING PROTEIN 3"/>
    <property type="match status" value="1"/>
</dbReference>
<dbReference type="PANTHER" id="PTHR15832">
    <property type="entry name" value="SHC (SRC HOMOLOGY DOMAIN C-TERMINAL) ADAPTOR HOMOLOG"/>
    <property type="match status" value="1"/>
</dbReference>
<dbReference type="Pfam" id="PF00538">
    <property type="entry name" value="Linker_histone"/>
    <property type="match status" value="3"/>
</dbReference>
<dbReference type="PRINTS" id="PR00624">
    <property type="entry name" value="HISTONEH5"/>
</dbReference>
<dbReference type="SMART" id="SM00526">
    <property type="entry name" value="H15"/>
    <property type="match status" value="3"/>
</dbReference>
<dbReference type="SUPFAM" id="SSF46785">
    <property type="entry name" value="Winged helix' DNA-binding domain"/>
    <property type="match status" value="3"/>
</dbReference>
<dbReference type="PROSITE" id="PS51504">
    <property type="entry name" value="H15"/>
    <property type="match status" value="3"/>
</dbReference>